<accession>P80287</accession>
<dbReference type="EC" id="4.6.1.18"/>
<dbReference type="PIR" id="S41111">
    <property type="entry name" value="S41111"/>
</dbReference>
<dbReference type="SMR" id="P80287"/>
<dbReference type="GO" id="GO:0005576">
    <property type="term" value="C:extracellular region"/>
    <property type="evidence" value="ECO:0007669"/>
    <property type="project" value="UniProtKB-SubCell"/>
</dbReference>
<dbReference type="GO" id="GO:0016829">
    <property type="term" value="F:lyase activity"/>
    <property type="evidence" value="ECO:0007669"/>
    <property type="project" value="UniProtKB-KW"/>
</dbReference>
<dbReference type="GO" id="GO:0003676">
    <property type="term" value="F:nucleic acid binding"/>
    <property type="evidence" value="ECO:0007669"/>
    <property type="project" value="InterPro"/>
</dbReference>
<dbReference type="GO" id="GO:0004522">
    <property type="term" value="F:ribonuclease A activity"/>
    <property type="evidence" value="ECO:0007669"/>
    <property type="project" value="UniProtKB-EC"/>
</dbReference>
<dbReference type="GO" id="GO:0050830">
    <property type="term" value="P:defense response to Gram-positive bacterium"/>
    <property type="evidence" value="ECO:0007669"/>
    <property type="project" value="TreeGrafter"/>
</dbReference>
<dbReference type="CDD" id="cd06265">
    <property type="entry name" value="RNase_A_canonical"/>
    <property type="match status" value="1"/>
</dbReference>
<dbReference type="Gene3D" id="3.10.130.10">
    <property type="entry name" value="Ribonuclease A-like domain"/>
    <property type="match status" value="1"/>
</dbReference>
<dbReference type="InterPro" id="IPR001427">
    <property type="entry name" value="RNaseA"/>
</dbReference>
<dbReference type="InterPro" id="IPR036816">
    <property type="entry name" value="RNaseA-like_dom_sf"/>
</dbReference>
<dbReference type="InterPro" id="IPR023411">
    <property type="entry name" value="RNaseA_AS"/>
</dbReference>
<dbReference type="InterPro" id="IPR023412">
    <property type="entry name" value="RNaseA_domain"/>
</dbReference>
<dbReference type="PANTHER" id="PTHR11437:SF10">
    <property type="entry name" value="ANGIOGENIN-RELATED"/>
    <property type="match status" value="1"/>
</dbReference>
<dbReference type="PANTHER" id="PTHR11437">
    <property type="entry name" value="RIBONUCLEASE"/>
    <property type="match status" value="1"/>
</dbReference>
<dbReference type="Pfam" id="PF00074">
    <property type="entry name" value="RnaseA"/>
    <property type="match status" value="1"/>
</dbReference>
<dbReference type="PRINTS" id="PR00794">
    <property type="entry name" value="RIBONUCLEASE"/>
</dbReference>
<dbReference type="SMART" id="SM00092">
    <property type="entry name" value="RNAse_Pc"/>
    <property type="match status" value="1"/>
</dbReference>
<dbReference type="SUPFAM" id="SSF54076">
    <property type="entry name" value="RNase A-like"/>
    <property type="match status" value="1"/>
</dbReference>
<dbReference type="PROSITE" id="PS00127">
    <property type="entry name" value="RNASE_PANCREATIC"/>
    <property type="match status" value="1"/>
</dbReference>
<reference key="1">
    <citation type="journal article" date="1994" name="Eur. J. Biochem.">
        <title>The amino acid sequence of iguana (Iguana iguana) pancreatic ribonuclease.</title>
        <authorList>
            <person name="Zhao W."/>
            <person name="Beintema J.J."/>
            <person name="Hofsteenge J."/>
        </authorList>
    </citation>
    <scope>PROTEIN SEQUENCE</scope>
    <scope>PYROGLUTAMATE FORMATION AT GLN-1</scope>
    <source>
        <tissue>Pancreas</tissue>
    </source>
</reference>
<sequence>QDWSSFQNKHIDYPETSASNPNAYCDLMMQRRNLNPTKCKTRNTFVHASPSEIQQVCGSGGTHYEDNLYDSNESFDLTDCKNVGGTAPSSCKYNGTPGTKRIRIACENNQPVHFELVLS</sequence>
<name>RNAS1_IGUIG</name>
<feature type="chain" id="PRO_0000057203" description="Ribonuclease pancreatic">
    <location>
        <begin position="1"/>
        <end position="119"/>
    </location>
</feature>
<feature type="active site" description="Proton acceptor" evidence="1">
    <location>
        <position position="10"/>
    </location>
</feature>
<feature type="active site" description="Proton donor" evidence="1">
    <location>
        <position position="113"/>
    </location>
</feature>
<feature type="binding site" evidence="1">
    <location>
        <begin position="40"/>
        <end position="44"/>
    </location>
    <ligand>
        <name>substrate</name>
    </ligand>
</feature>
<feature type="modified residue" description="Pyrrolidone carboxylic acid" evidence="2">
    <location>
        <position position="1"/>
    </location>
</feature>
<feature type="disulfide bond" evidence="1">
    <location>
        <begin position="25"/>
        <end position="80"/>
    </location>
</feature>
<feature type="disulfide bond" evidence="1">
    <location>
        <begin position="39"/>
        <end position="91"/>
    </location>
</feature>
<feature type="disulfide bond" evidence="1">
    <location>
        <begin position="57"/>
        <end position="106"/>
    </location>
</feature>
<protein>
    <recommendedName>
        <fullName>Ribonuclease pancreatic</fullName>
        <ecNumber>4.6.1.18</ecNumber>
    </recommendedName>
    <alternativeName>
        <fullName>RNase 1</fullName>
    </alternativeName>
    <alternativeName>
        <fullName>RNase A</fullName>
    </alternativeName>
</protein>
<organism>
    <name type="scientific">Iguana iguana</name>
    <name type="common">Common iguana</name>
    <dbReference type="NCBI Taxonomy" id="8517"/>
    <lineage>
        <taxon>Eukaryota</taxon>
        <taxon>Metazoa</taxon>
        <taxon>Chordata</taxon>
        <taxon>Craniata</taxon>
        <taxon>Vertebrata</taxon>
        <taxon>Euteleostomi</taxon>
        <taxon>Lepidosauria</taxon>
        <taxon>Squamata</taxon>
        <taxon>Bifurcata</taxon>
        <taxon>Unidentata</taxon>
        <taxon>Episquamata</taxon>
        <taxon>Toxicofera</taxon>
        <taxon>Iguania</taxon>
        <taxon>Iguanidae</taxon>
        <taxon>Iguaninae</taxon>
        <taxon>Iguana</taxon>
    </lineage>
</organism>
<proteinExistence type="evidence at protein level"/>
<comment type="function">
    <text evidence="1">Endonuclease that catalyzes the cleavage of RNA on the 3' side of pyrimidine nucleotides. Acts on single-stranded and double-stranded RNA (By similarity).</text>
</comment>
<comment type="catalytic activity">
    <reaction>
        <text>an [RNA] containing cytidine + H2O = an [RNA]-3'-cytidine-3'-phosphate + a 5'-hydroxy-ribonucleotide-3'-[RNA].</text>
        <dbReference type="EC" id="4.6.1.18"/>
    </reaction>
</comment>
<comment type="catalytic activity">
    <reaction>
        <text>an [RNA] containing uridine + H2O = an [RNA]-3'-uridine-3'-phosphate + a 5'-hydroxy-ribonucleotide-3'-[RNA].</text>
        <dbReference type="EC" id="4.6.1.18"/>
    </reaction>
</comment>
<comment type="subunit">
    <text evidence="1">Monomer. Interacts with and forms tight 1:1 complexes with RNH1. Dimerization of two such complexes may occur. Interaction with RNH1 inhibits this protein (By similarity).</text>
</comment>
<comment type="subcellular location">
    <subcellularLocation>
        <location>Secreted</location>
    </subcellularLocation>
</comment>
<comment type="tissue specificity">
    <text>Pancreas.</text>
</comment>
<comment type="similarity">
    <text evidence="3">Belongs to the pancreatic ribonuclease family.</text>
</comment>
<evidence type="ECO:0000250" key="1"/>
<evidence type="ECO:0000269" key="2">
    <source>
    </source>
</evidence>
<evidence type="ECO:0000305" key="3"/>
<keyword id="KW-0903">Direct protein sequencing</keyword>
<keyword id="KW-1015">Disulfide bond</keyword>
<keyword id="KW-0255">Endonuclease</keyword>
<keyword id="KW-0378">Hydrolase</keyword>
<keyword id="KW-0456">Lyase</keyword>
<keyword id="KW-0540">Nuclease</keyword>
<keyword id="KW-0873">Pyrrolidone carboxylic acid</keyword>
<keyword id="KW-0964">Secreted</keyword>